<gene>
    <name type="primary">ctse-b</name>
    <name type="synonym">ce2</name>
</gene>
<keyword id="KW-0064">Aspartyl protease</keyword>
<keyword id="KW-1015">Disulfide bond</keyword>
<keyword id="KW-0967">Endosome</keyword>
<keyword id="KW-0325">Glycoprotein</keyword>
<keyword id="KW-0378">Hydrolase</keyword>
<keyword id="KW-0645">Protease</keyword>
<keyword id="KW-1185">Reference proteome</keyword>
<keyword id="KW-0732">Signal</keyword>
<keyword id="KW-0865">Zymogen</keyword>
<name>CATEB_XENLA</name>
<sequence>MRQILVLLLFVTLVYGLIRVPLKRQKSIRKTPKEKGKLSHVWTQQGIDMVQYTDSCNNDQAPSEPLINYMDVQYFGEISIGTPPQNFTVIFDTGSSNLWVPSVYCISPACAQHNRFQPQLSSTYESNGNNFSLQYGTGSLSGVIGIDSVTVEGILVQNQQFGESVSEPGSTFVDASFDGILGLGYPSIAVGGCTPVFDNMIAQNLVELPMFSVYMSRDPNSPVGGELVFGGFDASRFSGQLNWVPVTNQGYWQIQLDNIQINGEVVFCSGGCQAIVDTGTSMITGPSSDIVQLQSIIGASAANGDYEVDCTVLNKMPTMTFTINGIGYQMTPQQYTLQDDDGVCSSGFQGLDISPPAGPLWILGDVFIGQYYSVFDRGNNRVGLAPVVPYPPLMNGV</sequence>
<protein>
    <recommendedName>
        <fullName>Cathepsin E-B</fullName>
        <ecNumber>3.4.23.34</ecNumber>
    </recommendedName>
</protein>
<feature type="signal peptide" evidence="4">
    <location>
        <begin position="1"/>
        <end position="16"/>
    </location>
</feature>
<feature type="propeptide" id="PRO_0000025986" description="Activation peptide" evidence="4">
    <location>
        <begin position="17"/>
        <end position="49"/>
    </location>
</feature>
<feature type="chain" id="PRO_0000025987" description="Cathepsin E-B">
    <location>
        <begin position="50"/>
        <end position="397"/>
    </location>
</feature>
<feature type="domain" description="Peptidase A1" evidence="5">
    <location>
        <begin position="74"/>
        <end position="385"/>
    </location>
</feature>
<feature type="active site" evidence="2 6">
    <location>
        <position position="92"/>
    </location>
</feature>
<feature type="active site" evidence="2 6">
    <location>
        <position position="277"/>
    </location>
</feature>
<feature type="glycosylation site" description="N-linked (GlcNAc...) asparagine" evidence="8">
    <location>
        <position position="86"/>
    </location>
</feature>
<feature type="glycosylation site" description="N-linked (GlcNAc...) asparagine" evidence="8">
    <location>
        <position position="130"/>
    </location>
</feature>
<feature type="disulfide bond" evidence="2">
    <location>
        <begin position="105"/>
        <end position="110"/>
    </location>
</feature>
<feature type="disulfide bond" evidence="2">
    <location>
        <begin position="268"/>
        <end position="272"/>
    </location>
</feature>
<feature type="disulfide bond" evidence="2">
    <location>
        <begin position="310"/>
        <end position="344"/>
    </location>
</feature>
<comment type="function">
    <text evidence="3">May have a role in immune function. Probably involved in the processing of antigenic peptides during MHC class II-mediated antigen presentation (By similarity).</text>
</comment>
<comment type="catalytic activity">
    <reaction evidence="4">
        <text>Similar to cathepsin D, but slightly broader specificity.</text>
        <dbReference type="EC" id="3.4.23.34"/>
    </reaction>
</comment>
<comment type="subunit">
    <text evidence="4">Homodimer; disulfide-linked.</text>
</comment>
<comment type="subcellular location">
    <subcellularLocation>
        <location evidence="1">Endosome</location>
    </subcellularLocation>
    <text evidence="1">The proenzyme is localized to the endoplasmic reticulum and Golgi apparatus, while the mature enzyme is localized to the endosome.</text>
</comment>
<comment type="tissue specificity">
    <text evidence="7">Expressed predominantly in the anterior and posterior adult stomach and at much lower levels in the larval foregut.</text>
</comment>
<comment type="developmental stage">
    <text evidence="7">Expression levels are low in surface mucous cells and manicotto gland cells of the foregut epithelium of pro-metamorphic tadpoles. During metamorphosis, expression levels rise markedly in proliferating adult epithelial primordia. In the adult stomach, expression was strongest in oxynticopeptic cells, but was also detected at a lower level in surface mucose cells.</text>
</comment>
<comment type="PTM">
    <text evidence="1">Glycosylated. Contains high mannose-type oligosaccharide (By similarity).</text>
</comment>
<comment type="similarity">
    <text evidence="8">Belongs to the peptidase A1 family.</text>
</comment>
<dbReference type="EC" id="3.4.23.34"/>
<dbReference type="EMBL" id="AB080685">
    <property type="protein sequence ID" value="BAC57454.1"/>
    <property type="molecule type" value="mRNA"/>
</dbReference>
<dbReference type="RefSeq" id="NP_001079044.1">
    <property type="nucleotide sequence ID" value="NM_001085575.1"/>
</dbReference>
<dbReference type="SMR" id="Q805F2"/>
<dbReference type="MEROPS" id="A01.010"/>
<dbReference type="GlyCosmos" id="Q805F2">
    <property type="glycosylation" value="2 sites, No reported glycans"/>
</dbReference>
<dbReference type="GeneID" id="373573"/>
<dbReference type="KEGG" id="xla:373573"/>
<dbReference type="AGR" id="Xenbase:XB-GENE-6253064"/>
<dbReference type="CTD" id="373573"/>
<dbReference type="Xenbase" id="XB-GENE-6253064">
    <property type="gene designation" value="ctse.S"/>
</dbReference>
<dbReference type="OMA" id="IPYGRGH"/>
<dbReference type="OrthoDB" id="771136at2759"/>
<dbReference type="Proteomes" id="UP000186698">
    <property type="component" value="Chromosome 2S"/>
</dbReference>
<dbReference type="Bgee" id="373573">
    <property type="expression patterns" value="Expressed in stomach and 6 other cell types or tissues"/>
</dbReference>
<dbReference type="GO" id="GO:0005768">
    <property type="term" value="C:endosome"/>
    <property type="evidence" value="ECO:0000250"/>
    <property type="project" value="UniProtKB"/>
</dbReference>
<dbReference type="GO" id="GO:0004190">
    <property type="term" value="F:aspartic-type endopeptidase activity"/>
    <property type="evidence" value="ECO:0000250"/>
    <property type="project" value="UniProtKB"/>
</dbReference>
<dbReference type="GO" id="GO:0019886">
    <property type="term" value="P:antigen processing and presentation of exogenous peptide antigen via MHC class II"/>
    <property type="evidence" value="ECO:0000250"/>
    <property type="project" value="UniProtKB"/>
</dbReference>
<dbReference type="GO" id="GO:0006508">
    <property type="term" value="P:proteolysis"/>
    <property type="evidence" value="ECO:0000318"/>
    <property type="project" value="GO_Central"/>
</dbReference>
<dbReference type="FunFam" id="2.40.70.10:FF:000006">
    <property type="entry name" value="Cathepsin E"/>
    <property type="match status" value="1"/>
</dbReference>
<dbReference type="FunFam" id="2.40.70.10:FF:000004">
    <property type="entry name" value="Pepsin A"/>
    <property type="match status" value="1"/>
</dbReference>
<dbReference type="Gene3D" id="2.40.70.10">
    <property type="entry name" value="Acid Proteases"/>
    <property type="match status" value="2"/>
</dbReference>
<dbReference type="InterPro" id="IPR001461">
    <property type="entry name" value="Aspartic_peptidase_A1"/>
</dbReference>
<dbReference type="InterPro" id="IPR001969">
    <property type="entry name" value="Aspartic_peptidase_AS"/>
</dbReference>
<dbReference type="InterPro" id="IPR012848">
    <property type="entry name" value="Aspartic_peptidase_N"/>
</dbReference>
<dbReference type="InterPro" id="IPR033121">
    <property type="entry name" value="PEPTIDASE_A1"/>
</dbReference>
<dbReference type="InterPro" id="IPR021109">
    <property type="entry name" value="Peptidase_aspartic_dom_sf"/>
</dbReference>
<dbReference type="PANTHER" id="PTHR47966">
    <property type="entry name" value="BETA-SITE APP-CLEAVING ENZYME, ISOFORM A-RELATED"/>
    <property type="match status" value="1"/>
</dbReference>
<dbReference type="PANTHER" id="PTHR47966:SF26">
    <property type="entry name" value="CATHEPSIN E"/>
    <property type="match status" value="1"/>
</dbReference>
<dbReference type="Pfam" id="PF07966">
    <property type="entry name" value="A1_Propeptide"/>
    <property type="match status" value="1"/>
</dbReference>
<dbReference type="Pfam" id="PF00026">
    <property type="entry name" value="Asp"/>
    <property type="match status" value="1"/>
</dbReference>
<dbReference type="PRINTS" id="PR00792">
    <property type="entry name" value="PEPSIN"/>
</dbReference>
<dbReference type="SUPFAM" id="SSF50630">
    <property type="entry name" value="Acid proteases"/>
    <property type="match status" value="1"/>
</dbReference>
<dbReference type="PROSITE" id="PS00141">
    <property type="entry name" value="ASP_PROTEASE"/>
    <property type="match status" value="2"/>
</dbReference>
<dbReference type="PROSITE" id="PS51767">
    <property type="entry name" value="PEPTIDASE_A1"/>
    <property type="match status" value="1"/>
</dbReference>
<reference evidence="8" key="1">
    <citation type="journal article" date="2003" name="J. Biochem.">
        <title>Differential expression of two cathepsin Es during metamorphosis-associated remodeling of the larval to adult type epithelium in Xenopus stomach.</title>
        <authorList>
            <person name="Ikuzawa M."/>
            <person name="Yasumasu S."/>
            <person name="Inokuchi T."/>
            <person name="Kobayashi K."/>
            <person name="Nomura K."/>
            <person name="Iuchi I."/>
        </authorList>
    </citation>
    <scope>NUCLEOTIDE SEQUENCE [MRNA]</scope>
    <scope>TISSUE SPECIFICITY</scope>
    <scope>DEVELOPMENTAL STAGE</scope>
</reference>
<organism evidence="9">
    <name type="scientific">Xenopus laevis</name>
    <name type="common">African clawed frog</name>
    <dbReference type="NCBI Taxonomy" id="8355"/>
    <lineage>
        <taxon>Eukaryota</taxon>
        <taxon>Metazoa</taxon>
        <taxon>Chordata</taxon>
        <taxon>Craniata</taxon>
        <taxon>Vertebrata</taxon>
        <taxon>Euteleostomi</taxon>
        <taxon>Amphibia</taxon>
        <taxon>Batrachia</taxon>
        <taxon>Anura</taxon>
        <taxon>Pipoidea</taxon>
        <taxon>Pipidae</taxon>
        <taxon>Xenopodinae</taxon>
        <taxon>Xenopus</taxon>
        <taxon>Xenopus</taxon>
    </lineage>
</organism>
<accession>Q805F2</accession>
<evidence type="ECO:0000250" key="1"/>
<evidence type="ECO:0000250" key="2">
    <source>
        <dbReference type="UniProtKB" id="P00790"/>
    </source>
</evidence>
<evidence type="ECO:0000250" key="3">
    <source>
        <dbReference type="UniProtKB" id="P14091"/>
    </source>
</evidence>
<evidence type="ECO:0000250" key="4">
    <source>
        <dbReference type="UniProtKB" id="Q805F3"/>
    </source>
</evidence>
<evidence type="ECO:0000255" key="5">
    <source>
        <dbReference type="PROSITE-ProRule" id="PRU01103"/>
    </source>
</evidence>
<evidence type="ECO:0000255" key="6">
    <source>
        <dbReference type="PROSITE-ProRule" id="PRU10094"/>
    </source>
</evidence>
<evidence type="ECO:0000269" key="7">
    <source>
    </source>
</evidence>
<evidence type="ECO:0000305" key="8"/>
<evidence type="ECO:0000312" key="9">
    <source>
        <dbReference type="EMBL" id="BAC57454.1"/>
    </source>
</evidence>
<proteinExistence type="evidence at transcript level"/>